<organism>
    <name type="scientific">Chlorobium chlorochromatii (strain CaD3)</name>
    <dbReference type="NCBI Taxonomy" id="340177"/>
    <lineage>
        <taxon>Bacteria</taxon>
        <taxon>Pseudomonadati</taxon>
        <taxon>Chlorobiota</taxon>
        <taxon>Chlorobiia</taxon>
        <taxon>Chlorobiales</taxon>
        <taxon>Chlorobiaceae</taxon>
        <taxon>Chlorobium/Pelodictyon group</taxon>
        <taxon>Chlorobium</taxon>
    </lineage>
</organism>
<sequence length="449" mass="49233">MTNANPDAFYIHTFGCQMNQADSGIMTAILQNEGYVAASNEADAGIVLLNTCAVREHATERVGHLLQHLHGRKKRSKGRLLVGVTGCIPQYEREVLFKNYPVVDFLAGPDTYRSLPLLIKQVQQAGKGATEAALAFNSAETYDGIEPVRSSSMSAFVPVMRGCNNHCAYCVVPLTRGRERSHPKAAVLNEVRQLAEAGYREITLLGQNVNSYYDPLAQCNFAELLAAVSCAAPATRIRFTTSHPKDISEALVRTIAEHSNICNHIHLPVQSGSSRILRLMQRGHTIEEYLEKIALIRSLIPNVTLSTDMIAGFCGETEADHQATLRLLEEVQFDSAFMFYYSPRPRTPAAEKLTDDVPEALKKARLQEIIECQNRISASLFSQAVGSVVEVLAEAESRRSSEQLMGRTAGNRTVVFARNGYQAGDVLHVRITGSTSATLLGEPLISTTL</sequence>
<name>MIAB_CHLCH</name>
<evidence type="ECO:0000255" key="1">
    <source>
        <dbReference type="HAMAP-Rule" id="MF_01864"/>
    </source>
</evidence>
<evidence type="ECO:0000255" key="2">
    <source>
        <dbReference type="PROSITE-ProRule" id="PRU01266"/>
    </source>
</evidence>
<reference key="1">
    <citation type="submission" date="2005-08" db="EMBL/GenBank/DDBJ databases">
        <title>Complete sequence of Chlorobium chlorochromatii CaD3.</title>
        <authorList>
            <consortium name="US DOE Joint Genome Institute"/>
            <person name="Copeland A."/>
            <person name="Lucas S."/>
            <person name="Lapidus A."/>
            <person name="Barry K."/>
            <person name="Detter J.C."/>
            <person name="Glavina T."/>
            <person name="Hammon N."/>
            <person name="Israni S."/>
            <person name="Pitluck S."/>
            <person name="Bryant D."/>
            <person name="Schmutz J."/>
            <person name="Larimer F."/>
            <person name="Land M."/>
            <person name="Kyrpides N."/>
            <person name="Ivanova N."/>
            <person name="Richardson P."/>
        </authorList>
    </citation>
    <scope>NUCLEOTIDE SEQUENCE [LARGE SCALE GENOMIC DNA]</scope>
    <source>
        <strain>CaD3</strain>
    </source>
</reference>
<dbReference type="EC" id="2.8.4.3" evidence="1"/>
<dbReference type="EMBL" id="CP000108">
    <property type="protein sequence ID" value="ABB27486.1"/>
    <property type="molecule type" value="Genomic_DNA"/>
</dbReference>
<dbReference type="SMR" id="Q3AU39"/>
<dbReference type="STRING" id="340177.Cag_0208"/>
<dbReference type="KEGG" id="cch:Cag_0208"/>
<dbReference type="eggNOG" id="COG0621">
    <property type="taxonomic scope" value="Bacteria"/>
</dbReference>
<dbReference type="HOGENOM" id="CLU_018697_2_0_10"/>
<dbReference type="OrthoDB" id="9805215at2"/>
<dbReference type="GO" id="GO:0005829">
    <property type="term" value="C:cytosol"/>
    <property type="evidence" value="ECO:0007669"/>
    <property type="project" value="TreeGrafter"/>
</dbReference>
<dbReference type="GO" id="GO:0051539">
    <property type="term" value="F:4 iron, 4 sulfur cluster binding"/>
    <property type="evidence" value="ECO:0007669"/>
    <property type="project" value="UniProtKB-UniRule"/>
</dbReference>
<dbReference type="GO" id="GO:0046872">
    <property type="term" value="F:metal ion binding"/>
    <property type="evidence" value="ECO:0007669"/>
    <property type="project" value="UniProtKB-KW"/>
</dbReference>
<dbReference type="GO" id="GO:0035597">
    <property type="term" value="F:N6-isopentenyladenosine methylthiotransferase activity"/>
    <property type="evidence" value="ECO:0007669"/>
    <property type="project" value="TreeGrafter"/>
</dbReference>
<dbReference type="CDD" id="cd01335">
    <property type="entry name" value="Radical_SAM"/>
    <property type="match status" value="1"/>
</dbReference>
<dbReference type="FunFam" id="3.40.50.12160:FF:000003">
    <property type="entry name" value="CDK5 regulatory subunit-associated protein 1"/>
    <property type="match status" value="1"/>
</dbReference>
<dbReference type="FunFam" id="3.80.30.20:FF:000001">
    <property type="entry name" value="tRNA-2-methylthio-N(6)-dimethylallyladenosine synthase 2"/>
    <property type="match status" value="1"/>
</dbReference>
<dbReference type="Gene3D" id="3.40.50.12160">
    <property type="entry name" value="Methylthiotransferase, N-terminal domain"/>
    <property type="match status" value="1"/>
</dbReference>
<dbReference type="Gene3D" id="3.80.30.20">
    <property type="entry name" value="tm_1862 like domain"/>
    <property type="match status" value="1"/>
</dbReference>
<dbReference type="HAMAP" id="MF_01864">
    <property type="entry name" value="tRNA_metthiotr_MiaB"/>
    <property type="match status" value="1"/>
</dbReference>
<dbReference type="InterPro" id="IPR006638">
    <property type="entry name" value="Elp3/MiaA/NifB-like_rSAM"/>
</dbReference>
<dbReference type="InterPro" id="IPR005839">
    <property type="entry name" value="Methylthiotransferase"/>
</dbReference>
<dbReference type="InterPro" id="IPR020612">
    <property type="entry name" value="Methylthiotransferase_CS"/>
</dbReference>
<dbReference type="InterPro" id="IPR013848">
    <property type="entry name" value="Methylthiotransferase_N"/>
</dbReference>
<dbReference type="InterPro" id="IPR038135">
    <property type="entry name" value="Methylthiotransferase_N_sf"/>
</dbReference>
<dbReference type="InterPro" id="IPR006463">
    <property type="entry name" value="MiaB_methiolase"/>
</dbReference>
<dbReference type="InterPro" id="IPR007197">
    <property type="entry name" value="rSAM"/>
</dbReference>
<dbReference type="InterPro" id="IPR023404">
    <property type="entry name" value="rSAM_horseshoe"/>
</dbReference>
<dbReference type="InterPro" id="IPR002792">
    <property type="entry name" value="TRAM_dom"/>
</dbReference>
<dbReference type="NCBIfam" id="TIGR01574">
    <property type="entry name" value="miaB-methiolase"/>
    <property type="match status" value="1"/>
</dbReference>
<dbReference type="NCBIfam" id="TIGR00089">
    <property type="entry name" value="MiaB/RimO family radical SAM methylthiotransferase"/>
    <property type="match status" value="1"/>
</dbReference>
<dbReference type="PANTHER" id="PTHR43020">
    <property type="entry name" value="CDK5 REGULATORY SUBUNIT-ASSOCIATED PROTEIN 1"/>
    <property type="match status" value="1"/>
</dbReference>
<dbReference type="PANTHER" id="PTHR43020:SF2">
    <property type="entry name" value="MITOCHONDRIAL TRNA METHYLTHIOTRANSFERASE CDK5RAP1"/>
    <property type="match status" value="1"/>
</dbReference>
<dbReference type="Pfam" id="PF04055">
    <property type="entry name" value="Radical_SAM"/>
    <property type="match status" value="1"/>
</dbReference>
<dbReference type="Pfam" id="PF01938">
    <property type="entry name" value="TRAM"/>
    <property type="match status" value="1"/>
</dbReference>
<dbReference type="Pfam" id="PF00919">
    <property type="entry name" value="UPF0004"/>
    <property type="match status" value="1"/>
</dbReference>
<dbReference type="SFLD" id="SFLDF00273">
    <property type="entry name" value="(dimethylallyl)adenosine_tRNA"/>
    <property type="match status" value="1"/>
</dbReference>
<dbReference type="SFLD" id="SFLDG01082">
    <property type="entry name" value="B12-binding_domain_containing"/>
    <property type="match status" value="1"/>
</dbReference>
<dbReference type="SFLD" id="SFLDF00413">
    <property type="entry name" value="CDK5RAP1"/>
    <property type="match status" value="1"/>
</dbReference>
<dbReference type="SFLD" id="SFLDG01061">
    <property type="entry name" value="methylthiotransferase"/>
    <property type="match status" value="1"/>
</dbReference>
<dbReference type="SMART" id="SM00729">
    <property type="entry name" value="Elp3"/>
    <property type="match status" value="1"/>
</dbReference>
<dbReference type="SUPFAM" id="SSF102114">
    <property type="entry name" value="Radical SAM enzymes"/>
    <property type="match status" value="1"/>
</dbReference>
<dbReference type="PROSITE" id="PS51449">
    <property type="entry name" value="MTTASE_N"/>
    <property type="match status" value="1"/>
</dbReference>
<dbReference type="PROSITE" id="PS01278">
    <property type="entry name" value="MTTASE_RADICAL"/>
    <property type="match status" value="1"/>
</dbReference>
<dbReference type="PROSITE" id="PS51918">
    <property type="entry name" value="RADICAL_SAM"/>
    <property type="match status" value="1"/>
</dbReference>
<dbReference type="PROSITE" id="PS50926">
    <property type="entry name" value="TRAM"/>
    <property type="match status" value="1"/>
</dbReference>
<accession>Q3AU39</accession>
<gene>
    <name evidence="1" type="primary">miaB</name>
    <name type="ordered locus">Cag_0208</name>
</gene>
<comment type="function">
    <text evidence="1">Catalyzes the methylthiolation of N6-(dimethylallyl)adenosine (i(6)A), leading to the formation of 2-methylthio-N6-(dimethylallyl)adenosine (ms(2)i(6)A) at position 37 in tRNAs that read codons beginning with uridine.</text>
</comment>
<comment type="catalytic activity">
    <reaction evidence="1">
        <text>N(6)-dimethylallyladenosine(37) in tRNA + (sulfur carrier)-SH + AH2 + 2 S-adenosyl-L-methionine = 2-methylsulfanyl-N(6)-dimethylallyladenosine(37) in tRNA + (sulfur carrier)-H + 5'-deoxyadenosine + L-methionine + A + S-adenosyl-L-homocysteine + 2 H(+)</text>
        <dbReference type="Rhea" id="RHEA:37067"/>
        <dbReference type="Rhea" id="RHEA-COMP:10375"/>
        <dbReference type="Rhea" id="RHEA-COMP:10376"/>
        <dbReference type="Rhea" id="RHEA-COMP:14737"/>
        <dbReference type="Rhea" id="RHEA-COMP:14739"/>
        <dbReference type="ChEBI" id="CHEBI:13193"/>
        <dbReference type="ChEBI" id="CHEBI:15378"/>
        <dbReference type="ChEBI" id="CHEBI:17319"/>
        <dbReference type="ChEBI" id="CHEBI:17499"/>
        <dbReference type="ChEBI" id="CHEBI:29917"/>
        <dbReference type="ChEBI" id="CHEBI:57844"/>
        <dbReference type="ChEBI" id="CHEBI:57856"/>
        <dbReference type="ChEBI" id="CHEBI:59789"/>
        <dbReference type="ChEBI" id="CHEBI:64428"/>
        <dbReference type="ChEBI" id="CHEBI:74415"/>
        <dbReference type="ChEBI" id="CHEBI:74417"/>
        <dbReference type="EC" id="2.8.4.3"/>
    </reaction>
</comment>
<comment type="cofactor">
    <cofactor evidence="1">
        <name>[4Fe-4S] cluster</name>
        <dbReference type="ChEBI" id="CHEBI:49883"/>
    </cofactor>
    <text evidence="1">Binds 2 [4Fe-4S] clusters. One cluster is coordinated with 3 cysteines and an exchangeable S-adenosyl-L-methionine.</text>
</comment>
<comment type="subunit">
    <text evidence="1">Monomer.</text>
</comment>
<comment type="subcellular location">
    <subcellularLocation>
        <location evidence="1">Cytoplasm</location>
    </subcellularLocation>
</comment>
<comment type="similarity">
    <text evidence="1">Belongs to the methylthiotransferase family. MiaB subfamily.</text>
</comment>
<proteinExistence type="inferred from homology"/>
<keyword id="KW-0004">4Fe-4S</keyword>
<keyword id="KW-0963">Cytoplasm</keyword>
<keyword id="KW-0408">Iron</keyword>
<keyword id="KW-0411">Iron-sulfur</keyword>
<keyword id="KW-0479">Metal-binding</keyword>
<keyword id="KW-0949">S-adenosyl-L-methionine</keyword>
<keyword id="KW-0808">Transferase</keyword>
<keyword id="KW-0819">tRNA processing</keyword>
<protein>
    <recommendedName>
        <fullName evidence="1">tRNA-2-methylthio-N(6)-dimethylallyladenosine synthase</fullName>
        <ecNumber evidence="1">2.8.4.3</ecNumber>
    </recommendedName>
    <alternativeName>
        <fullName evidence="1">(Dimethylallyl)adenosine tRNA methylthiotransferase MiaB</fullName>
    </alternativeName>
    <alternativeName>
        <fullName evidence="1">tRNA-i(6)A37 methylthiotransferase</fullName>
    </alternativeName>
</protein>
<feature type="chain" id="PRO_0000374207" description="tRNA-2-methylthio-N(6)-dimethylallyladenosine synthase">
    <location>
        <begin position="1"/>
        <end position="449"/>
    </location>
</feature>
<feature type="domain" description="MTTase N-terminal" evidence="1">
    <location>
        <begin position="7"/>
        <end position="124"/>
    </location>
</feature>
<feature type="domain" description="Radical SAM core" evidence="2">
    <location>
        <begin position="149"/>
        <end position="379"/>
    </location>
</feature>
<feature type="domain" description="TRAM" evidence="1">
    <location>
        <begin position="382"/>
        <end position="445"/>
    </location>
</feature>
<feature type="binding site" evidence="1">
    <location>
        <position position="16"/>
    </location>
    <ligand>
        <name>[4Fe-4S] cluster</name>
        <dbReference type="ChEBI" id="CHEBI:49883"/>
        <label>1</label>
    </ligand>
</feature>
<feature type="binding site" evidence="1">
    <location>
        <position position="52"/>
    </location>
    <ligand>
        <name>[4Fe-4S] cluster</name>
        <dbReference type="ChEBI" id="CHEBI:49883"/>
        <label>1</label>
    </ligand>
</feature>
<feature type="binding site" evidence="1">
    <location>
        <position position="87"/>
    </location>
    <ligand>
        <name>[4Fe-4S] cluster</name>
        <dbReference type="ChEBI" id="CHEBI:49883"/>
        <label>1</label>
    </ligand>
</feature>
<feature type="binding site" evidence="1">
    <location>
        <position position="163"/>
    </location>
    <ligand>
        <name>[4Fe-4S] cluster</name>
        <dbReference type="ChEBI" id="CHEBI:49883"/>
        <label>2</label>
        <note>4Fe-4S-S-AdoMet</note>
    </ligand>
</feature>
<feature type="binding site" evidence="1">
    <location>
        <position position="167"/>
    </location>
    <ligand>
        <name>[4Fe-4S] cluster</name>
        <dbReference type="ChEBI" id="CHEBI:49883"/>
        <label>2</label>
        <note>4Fe-4S-S-AdoMet</note>
    </ligand>
</feature>
<feature type="binding site" evidence="1">
    <location>
        <position position="170"/>
    </location>
    <ligand>
        <name>[4Fe-4S] cluster</name>
        <dbReference type="ChEBI" id="CHEBI:49883"/>
        <label>2</label>
        <note>4Fe-4S-S-AdoMet</note>
    </ligand>
</feature>